<feature type="chain" id="PRO_0000056537" description="Betaine aldehyde dehydrogenase">
    <location>
        <begin position="1"/>
        <end position="487"/>
    </location>
</feature>
<feature type="active site" description="Charge relay system" evidence="1">
    <location>
        <position position="161"/>
    </location>
</feature>
<feature type="active site" description="Proton acceptor" evidence="1">
    <location>
        <position position="249"/>
    </location>
</feature>
<feature type="active site" description="Nucleophile" evidence="1">
    <location>
        <position position="283"/>
    </location>
</feature>
<feature type="active site" description="Charge relay system" evidence="1">
    <location>
        <position position="461"/>
    </location>
</feature>
<feature type="binding site" evidence="1">
    <location>
        <position position="27"/>
    </location>
    <ligand>
        <name>K(+)</name>
        <dbReference type="ChEBI" id="CHEBI:29103"/>
        <label>1</label>
    </ligand>
</feature>
<feature type="binding site" evidence="1">
    <location>
        <position position="93"/>
    </location>
    <ligand>
        <name>K(+)</name>
        <dbReference type="ChEBI" id="CHEBI:29103"/>
        <label>1</label>
    </ligand>
</feature>
<feature type="binding site" evidence="1">
    <location>
        <begin position="149"/>
        <end position="151"/>
    </location>
    <ligand>
        <name>NAD(+)</name>
        <dbReference type="ChEBI" id="CHEBI:57540"/>
    </ligand>
</feature>
<feature type="binding site" evidence="1">
    <location>
        <begin position="175"/>
        <end position="178"/>
    </location>
    <ligand>
        <name>NAD(+)</name>
        <dbReference type="ChEBI" id="CHEBI:57540"/>
    </ligand>
</feature>
<feature type="binding site" evidence="1">
    <location>
        <begin position="228"/>
        <end position="231"/>
    </location>
    <ligand>
        <name>NAD(+)</name>
        <dbReference type="ChEBI" id="CHEBI:57540"/>
    </ligand>
</feature>
<feature type="binding site" evidence="1">
    <location>
        <position position="243"/>
    </location>
    <ligand>
        <name>K(+)</name>
        <dbReference type="ChEBI" id="CHEBI:29103"/>
        <label>2</label>
    </ligand>
</feature>
<feature type="binding site" evidence="1">
    <location>
        <position position="251"/>
    </location>
    <ligand>
        <name>NAD(+)</name>
        <dbReference type="ChEBI" id="CHEBI:57540"/>
    </ligand>
</feature>
<feature type="binding site" description="covalent" evidence="1">
    <location>
        <position position="283"/>
    </location>
    <ligand>
        <name>NAD(+)</name>
        <dbReference type="ChEBI" id="CHEBI:57540"/>
    </ligand>
</feature>
<feature type="binding site" evidence="1">
    <location>
        <position position="384"/>
    </location>
    <ligand>
        <name>NAD(+)</name>
        <dbReference type="ChEBI" id="CHEBI:57540"/>
    </ligand>
</feature>
<feature type="binding site" evidence="1">
    <location>
        <position position="454"/>
    </location>
    <ligand>
        <name>K(+)</name>
        <dbReference type="ChEBI" id="CHEBI:29103"/>
        <label>2</label>
    </ligand>
</feature>
<feature type="binding site" evidence="1">
    <location>
        <position position="457"/>
    </location>
    <ligand>
        <name>K(+)</name>
        <dbReference type="ChEBI" id="CHEBI:29103"/>
        <label>2</label>
    </ligand>
</feature>
<feature type="modified residue" description="Cysteine sulfenic acid (-SOH)" evidence="1">
    <location>
        <position position="283"/>
    </location>
</feature>
<name>BETB_BRUME</name>
<reference key="1">
    <citation type="journal article" date="2002" name="Proc. Natl. Acad. Sci. U.S.A.">
        <title>The genome sequence of the facultative intracellular pathogen Brucella melitensis.</title>
        <authorList>
            <person name="DelVecchio V.G."/>
            <person name="Kapatral V."/>
            <person name="Redkar R.J."/>
            <person name="Patra G."/>
            <person name="Mujer C."/>
            <person name="Los T."/>
            <person name="Ivanova N."/>
            <person name="Anderson I."/>
            <person name="Bhattacharyya A."/>
            <person name="Lykidis A."/>
            <person name="Reznik G."/>
            <person name="Jablonski L."/>
            <person name="Larsen N."/>
            <person name="D'Souza M."/>
            <person name="Bernal A."/>
            <person name="Mazur M."/>
            <person name="Goltsman E."/>
            <person name="Selkov E."/>
            <person name="Elzer P.H."/>
            <person name="Hagius S."/>
            <person name="O'Callaghan D."/>
            <person name="Letesson J.-J."/>
            <person name="Haselkorn R."/>
            <person name="Kyrpides N.C."/>
            <person name="Overbeek R."/>
        </authorList>
    </citation>
    <scope>NUCLEOTIDE SEQUENCE [LARGE SCALE GENOMIC DNA]</scope>
    <source>
        <strain>ATCC 23456 / CCUG 17765 / NCTC 10094 / 16M</strain>
    </source>
</reference>
<comment type="function">
    <text evidence="1">Involved in the biosynthesis of the osmoprotectant glycine betaine. Catalyzes the irreversible oxidation of betaine aldehyde to the corresponding acid.</text>
</comment>
<comment type="catalytic activity">
    <reaction evidence="1">
        <text>betaine aldehyde + NAD(+) + H2O = glycine betaine + NADH + 2 H(+)</text>
        <dbReference type="Rhea" id="RHEA:15305"/>
        <dbReference type="ChEBI" id="CHEBI:15377"/>
        <dbReference type="ChEBI" id="CHEBI:15378"/>
        <dbReference type="ChEBI" id="CHEBI:15710"/>
        <dbReference type="ChEBI" id="CHEBI:17750"/>
        <dbReference type="ChEBI" id="CHEBI:57540"/>
        <dbReference type="ChEBI" id="CHEBI:57945"/>
        <dbReference type="EC" id="1.2.1.8"/>
    </reaction>
    <physiologicalReaction direction="left-to-right" evidence="1">
        <dbReference type="Rhea" id="RHEA:15306"/>
    </physiologicalReaction>
</comment>
<comment type="cofactor">
    <cofactor evidence="1">
        <name>K(+)</name>
        <dbReference type="ChEBI" id="CHEBI:29103"/>
    </cofactor>
    <text evidence="1">Binds 2 potassium ions per subunit.</text>
</comment>
<comment type="pathway">
    <text evidence="1">Amine and polyamine biosynthesis; betaine biosynthesis via choline pathway; betaine from betaine aldehyde: step 1/1.</text>
</comment>
<comment type="subunit">
    <text evidence="1">Dimer of dimers.</text>
</comment>
<comment type="similarity">
    <text evidence="1">Belongs to the aldehyde dehydrogenase family.</text>
</comment>
<comment type="sequence caution" evidence="2">
    <conflict type="erroneous initiation">
        <sequence resource="EMBL-CDS" id="AAL52563"/>
    </conflict>
    <text>Extended N-terminus.</text>
</comment>
<sequence length="487" mass="52035">MKAQPKASHFIGGAFVEDKAGKPLPVIYPATGEEIASLYSATPGIIEAAYAAALKAQGEWAALKPVERGRILRRTAEILREKNRKLSKLETLDTGKALQETLVADAASAADALEFFGGIISGFNGEFVELGGSFAYTRREALGICVGIGAWNYPIQIAAWKSAPALAMGNAFIFKPSENTPLSALALAEAYKEAGLPDGLFNVVQGYGDVGAALVNHRLTAKVSLTGSVPTGRRIMAQAGEQLKHVTMELGGKSPLIVFDDADLESAIGGAMLGNFYSTGQVCSNGTRVFVHKNIRERFIERLVERTRKIRIGDPFDEATQMGPLISAAQRDKVLSYIKKGKAEGATLACGGGVPKLQGFDKGFFIEPTVFADVTDTMTIAREEIFGPVMSVLEFSDEDEVIARANDSEFGLAAGVFTADLSRGHHVIGQIKAGTCWINAYNLTPVEVPFGGYKQSGIGRENGIAALAHYSQIKTVYVEMGKVDSPY</sequence>
<protein>
    <recommendedName>
        <fullName evidence="1">Betaine aldehyde dehydrogenase</fullName>
        <shortName evidence="1">BADH</shortName>
        <ecNumber evidence="1">1.2.1.8</ecNumber>
    </recommendedName>
</protein>
<dbReference type="EC" id="1.2.1.8" evidence="1"/>
<dbReference type="EMBL" id="AE008917">
    <property type="protein sequence ID" value="AAL52563.1"/>
    <property type="status" value="ALT_INIT"/>
    <property type="molecule type" value="Genomic_DNA"/>
</dbReference>
<dbReference type="PIR" id="AH3424">
    <property type="entry name" value="AH3424"/>
</dbReference>
<dbReference type="RefSeq" id="WP_002963701.1">
    <property type="nucleotide sequence ID" value="NZ_GG703778.1"/>
</dbReference>
<dbReference type="SMR" id="Q8YFY0"/>
<dbReference type="GeneID" id="97534102"/>
<dbReference type="KEGG" id="bme:BMEI1382"/>
<dbReference type="KEGG" id="bmel:DK63_21"/>
<dbReference type="PATRIC" id="fig|224914.52.peg.23"/>
<dbReference type="eggNOG" id="COG1012">
    <property type="taxonomic scope" value="Bacteria"/>
</dbReference>
<dbReference type="PhylomeDB" id="Q8YFY0"/>
<dbReference type="UniPathway" id="UPA00529">
    <property type="reaction ID" value="UER00386"/>
</dbReference>
<dbReference type="Proteomes" id="UP000000419">
    <property type="component" value="Chromosome I"/>
</dbReference>
<dbReference type="GO" id="GO:0008802">
    <property type="term" value="F:betaine-aldehyde dehydrogenase (NAD+) activity"/>
    <property type="evidence" value="ECO:0007669"/>
    <property type="project" value="UniProtKB-UniRule"/>
</dbReference>
<dbReference type="GO" id="GO:0046872">
    <property type="term" value="F:metal ion binding"/>
    <property type="evidence" value="ECO:0007669"/>
    <property type="project" value="UniProtKB-KW"/>
</dbReference>
<dbReference type="GO" id="GO:0019285">
    <property type="term" value="P:glycine betaine biosynthetic process from choline"/>
    <property type="evidence" value="ECO:0007669"/>
    <property type="project" value="UniProtKB-UniRule"/>
</dbReference>
<dbReference type="CDD" id="cd07090">
    <property type="entry name" value="ALDH_F9_TMBADH"/>
    <property type="match status" value="1"/>
</dbReference>
<dbReference type="FunFam" id="3.40.605.10:FF:000026">
    <property type="entry name" value="Aldehyde dehydrogenase, putative"/>
    <property type="match status" value="1"/>
</dbReference>
<dbReference type="FunFam" id="3.40.309.10:FF:000014">
    <property type="entry name" value="NAD/NADP-dependent betaine aldehyde dehydrogenase"/>
    <property type="match status" value="1"/>
</dbReference>
<dbReference type="FunFam" id="3.40.605.10:FF:000007">
    <property type="entry name" value="NAD/NADP-dependent betaine aldehyde dehydrogenase"/>
    <property type="match status" value="1"/>
</dbReference>
<dbReference type="Gene3D" id="3.40.605.10">
    <property type="entry name" value="Aldehyde Dehydrogenase, Chain A, domain 1"/>
    <property type="match status" value="1"/>
</dbReference>
<dbReference type="Gene3D" id="3.40.309.10">
    <property type="entry name" value="Aldehyde Dehydrogenase, Chain A, domain 2"/>
    <property type="match status" value="1"/>
</dbReference>
<dbReference type="HAMAP" id="MF_00804">
    <property type="entry name" value="BADH"/>
    <property type="match status" value="1"/>
</dbReference>
<dbReference type="InterPro" id="IPR016161">
    <property type="entry name" value="Ald_DH/histidinol_DH"/>
</dbReference>
<dbReference type="InterPro" id="IPR016163">
    <property type="entry name" value="Ald_DH_C"/>
</dbReference>
<dbReference type="InterPro" id="IPR016160">
    <property type="entry name" value="Ald_DH_CS_CYS"/>
</dbReference>
<dbReference type="InterPro" id="IPR029510">
    <property type="entry name" value="Ald_DH_CS_GLU"/>
</dbReference>
<dbReference type="InterPro" id="IPR016162">
    <property type="entry name" value="Ald_DH_N"/>
</dbReference>
<dbReference type="InterPro" id="IPR015590">
    <property type="entry name" value="Aldehyde_DH_dom"/>
</dbReference>
<dbReference type="InterPro" id="IPR011264">
    <property type="entry name" value="BADH"/>
</dbReference>
<dbReference type="NCBIfam" id="TIGR01804">
    <property type="entry name" value="BADH"/>
    <property type="match status" value="1"/>
</dbReference>
<dbReference type="NCBIfam" id="NF009725">
    <property type="entry name" value="PRK13252.1"/>
    <property type="match status" value="1"/>
</dbReference>
<dbReference type="PANTHER" id="PTHR11699">
    <property type="entry name" value="ALDEHYDE DEHYDROGENASE-RELATED"/>
    <property type="match status" value="1"/>
</dbReference>
<dbReference type="Pfam" id="PF00171">
    <property type="entry name" value="Aldedh"/>
    <property type="match status" value="1"/>
</dbReference>
<dbReference type="SUPFAM" id="SSF53720">
    <property type="entry name" value="ALDH-like"/>
    <property type="match status" value="1"/>
</dbReference>
<dbReference type="PROSITE" id="PS00070">
    <property type="entry name" value="ALDEHYDE_DEHYDR_CYS"/>
    <property type="match status" value="1"/>
</dbReference>
<dbReference type="PROSITE" id="PS00687">
    <property type="entry name" value="ALDEHYDE_DEHYDR_GLU"/>
    <property type="match status" value="1"/>
</dbReference>
<proteinExistence type="inferred from homology"/>
<gene>
    <name evidence="1" type="primary">betB</name>
    <name type="ordered locus">BMEI1382</name>
</gene>
<accession>Q8YFY0</accession>
<keyword id="KW-0479">Metal-binding</keyword>
<keyword id="KW-0520">NAD</keyword>
<keyword id="KW-0521">NADP</keyword>
<keyword id="KW-0558">Oxidation</keyword>
<keyword id="KW-0560">Oxidoreductase</keyword>
<keyword id="KW-0630">Potassium</keyword>
<organism>
    <name type="scientific">Brucella melitensis biotype 1 (strain ATCC 23456 / CCUG 17765 / NCTC 10094 / 16M)</name>
    <dbReference type="NCBI Taxonomy" id="224914"/>
    <lineage>
        <taxon>Bacteria</taxon>
        <taxon>Pseudomonadati</taxon>
        <taxon>Pseudomonadota</taxon>
        <taxon>Alphaproteobacteria</taxon>
        <taxon>Hyphomicrobiales</taxon>
        <taxon>Brucellaceae</taxon>
        <taxon>Brucella/Ochrobactrum group</taxon>
        <taxon>Brucella</taxon>
    </lineage>
</organism>
<evidence type="ECO:0000255" key="1">
    <source>
        <dbReference type="HAMAP-Rule" id="MF_00804"/>
    </source>
</evidence>
<evidence type="ECO:0000305" key="2"/>